<reference key="1">
    <citation type="submission" date="2003-12" db="EMBL/GenBank/DDBJ databases">
        <title>Bats and birds: flying in the face of mtDNA evolutionary rates.</title>
        <authorList>
            <person name="Worthington Wilmer J.M."/>
            <person name="Schneider C.J."/>
            <person name="Sorenson M.D."/>
        </authorList>
    </citation>
    <scope>NUCLEOTIDE SEQUENCE [GENOMIC DNA]</scope>
    <source>
        <strain>Isolate 1</strain>
    </source>
</reference>
<dbReference type="EC" id="7.1.1.2" evidence="1"/>
<dbReference type="EMBL" id="AY504587">
    <property type="protein sequence ID" value="AAS91452.1"/>
    <property type="molecule type" value="Genomic_DNA"/>
</dbReference>
<dbReference type="SMR" id="Q330A5"/>
<dbReference type="GO" id="GO:0005743">
    <property type="term" value="C:mitochondrial inner membrane"/>
    <property type="evidence" value="ECO:0000250"/>
    <property type="project" value="UniProtKB"/>
</dbReference>
<dbReference type="GO" id="GO:0008137">
    <property type="term" value="F:NADH dehydrogenase (ubiquinone) activity"/>
    <property type="evidence" value="ECO:0000250"/>
    <property type="project" value="UniProtKB"/>
</dbReference>
<dbReference type="GO" id="GO:0006120">
    <property type="term" value="P:mitochondrial electron transport, NADH to ubiquinone"/>
    <property type="evidence" value="ECO:0000250"/>
    <property type="project" value="UniProtKB"/>
</dbReference>
<dbReference type="GO" id="GO:0032981">
    <property type="term" value="P:mitochondrial respiratory chain complex I assembly"/>
    <property type="evidence" value="ECO:0000250"/>
    <property type="project" value="UniProtKB"/>
</dbReference>
<dbReference type="InterPro" id="IPR050175">
    <property type="entry name" value="Complex_I_Subunit_2"/>
</dbReference>
<dbReference type="InterPro" id="IPR010933">
    <property type="entry name" value="NADH_DH_su2_C"/>
</dbReference>
<dbReference type="InterPro" id="IPR003917">
    <property type="entry name" value="NADH_UbQ_OxRdtase_chain2"/>
</dbReference>
<dbReference type="InterPro" id="IPR001750">
    <property type="entry name" value="ND/Mrp_TM"/>
</dbReference>
<dbReference type="PANTHER" id="PTHR46552">
    <property type="entry name" value="NADH-UBIQUINONE OXIDOREDUCTASE CHAIN 2"/>
    <property type="match status" value="1"/>
</dbReference>
<dbReference type="PANTHER" id="PTHR46552:SF1">
    <property type="entry name" value="NADH-UBIQUINONE OXIDOREDUCTASE CHAIN 2"/>
    <property type="match status" value="1"/>
</dbReference>
<dbReference type="Pfam" id="PF06444">
    <property type="entry name" value="NADH_dehy_S2_C"/>
    <property type="match status" value="1"/>
</dbReference>
<dbReference type="Pfam" id="PF00361">
    <property type="entry name" value="Proton_antipo_M"/>
    <property type="match status" value="1"/>
</dbReference>
<dbReference type="PRINTS" id="PR01436">
    <property type="entry name" value="NADHDHGNASE2"/>
</dbReference>
<comment type="function">
    <text evidence="1">Core subunit of the mitochondrial membrane respiratory chain NADH dehydrogenase (Complex I) which catalyzes electron transfer from NADH through the respiratory chain, using ubiquinone as an electron acceptor. Essential for the catalytic activity and assembly of complex I.</text>
</comment>
<comment type="catalytic activity">
    <reaction evidence="1">
        <text>a ubiquinone + NADH + 5 H(+)(in) = a ubiquinol + NAD(+) + 4 H(+)(out)</text>
        <dbReference type="Rhea" id="RHEA:29091"/>
        <dbReference type="Rhea" id="RHEA-COMP:9565"/>
        <dbReference type="Rhea" id="RHEA-COMP:9566"/>
        <dbReference type="ChEBI" id="CHEBI:15378"/>
        <dbReference type="ChEBI" id="CHEBI:16389"/>
        <dbReference type="ChEBI" id="CHEBI:17976"/>
        <dbReference type="ChEBI" id="CHEBI:57540"/>
        <dbReference type="ChEBI" id="CHEBI:57945"/>
        <dbReference type="EC" id="7.1.1.2"/>
    </reaction>
</comment>
<comment type="subunit">
    <text evidence="1 2">Core subunit of respiratory chain NADH dehydrogenase (Complex I) which is composed of 45 different subunits. Interacts with TMEM242 (By similarity).</text>
</comment>
<comment type="subcellular location">
    <subcellularLocation>
        <location evidence="2">Mitochondrion inner membrane</location>
        <topology evidence="3">Multi-pass membrane protein</topology>
    </subcellularLocation>
</comment>
<comment type="similarity">
    <text evidence="4">Belongs to the complex I subunit 2 family.</text>
</comment>
<evidence type="ECO:0000250" key="1">
    <source>
        <dbReference type="UniProtKB" id="P03891"/>
    </source>
</evidence>
<evidence type="ECO:0000250" key="2">
    <source>
        <dbReference type="UniProtKB" id="P03892"/>
    </source>
</evidence>
<evidence type="ECO:0000255" key="3"/>
<evidence type="ECO:0000305" key="4"/>
<geneLocation type="mitochondrion"/>
<protein>
    <recommendedName>
        <fullName evidence="1">NADH-ubiquinone oxidoreductase chain 2</fullName>
        <ecNumber evidence="1">7.1.1.2</ecNumber>
    </recommendedName>
    <alternativeName>
        <fullName>NADH dehydrogenase subunit 2</fullName>
    </alternativeName>
</protein>
<feature type="chain" id="PRO_0000256671" description="NADH-ubiquinone oxidoreductase chain 2">
    <location>
        <begin position="1"/>
        <end position="347"/>
    </location>
</feature>
<feature type="transmembrane region" description="Helical" evidence="3">
    <location>
        <begin position="3"/>
        <end position="23"/>
    </location>
</feature>
<feature type="transmembrane region" description="Helical" evidence="3">
    <location>
        <begin position="25"/>
        <end position="45"/>
    </location>
</feature>
<feature type="transmembrane region" description="Helical" evidence="3">
    <location>
        <begin position="59"/>
        <end position="79"/>
    </location>
</feature>
<feature type="transmembrane region" description="Helical" evidence="3">
    <location>
        <begin position="96"/>
        <end position="116"/>
    </location>
</feature>
<feature type="transmembrane region" description="Helical" evidence="3">
    <location>
        <begin position="122"/>
        <end position="142"/>
    </location>
</feature>
<feature type="transmembrane region" description="Helical" evidence="3">
    <location>
        <begin position="149"/>
        <end position="169"/>
    </location>
</feature>
<feature type="transmembrane region" description="Helical" evidence="3">
    <location>
        <begin position="178"/>
        <end position="198"/>
    </location>
</feature>
<feature type="transmembrane region" description="Helical" evidence="3">
    <location>
        <begin position="201"/>
        <end position="221"/>
    </location>
</feature>
<feature type="transmembrane region" description="Helical" evidence="3">
    <location>
        <begin position="237"/>
        <end position="257"/>
    </location>
</feature>
<feature type="transmembrane region" description="Helical" evidence="3">
    <location>
        <begin position="274"/>
        <end position="294"/>
    </location>
</feature>
<feature type="transmembrane region" description="Helical" evidence="3">
    <location>
        <begin position="326"/>
        <end position="346"/>
    </location>
</feature>
<name>NU2M_NYCAE</name>
<organism>
    <name type="scientific">Nyctimene aello</name>
    <name type="common">Broad-striped tube-nosed fruit bat</name>
    <name type="synonym">Nyctimene celaeno</name>
    <dbReference type="NCBI Taxonomy" id="270783"/>
    <lineage>
        <taxon>Eukaryota</taxon>
        <taxon>Metazoa</taxon>
        <taxon>Chordata</taxon>
        <taxon>Craniata</taxon>
        <taxon>Vertebrata</taxon>
        <taxon>Euteleostomi</taxon>
        <taxon>Mammalia</taxon>
        <taxon>Eutheria</taxon>
        <taxon>Laurasiatheria</taxon>
        <taxon>Chiroptera</taxon>
        <taxon>Yinpterochiroptera</taxon>
        <taxon>Pteropodoidea</taxon>
        <taxon>Pteropodidae</taxon>
        <taxon>Nyctimeninae</taxon>
        <taxon>Nyctimene</taxon>
    </lineage>
</organism>
<gene>
    <name evidence="1" type="primary">MT-ND2</name>
    <name type="synonym">MTND2</name>
    <name type="synonym">NADH2</name>
    <name type="synonym">ND2</name>
</gene>
<keyword id="KW-0249">Electron transport</keyword>
<keyword id="KW-0472">Membrane</keyword>
<keyword id="KW-0496">Mitochondrion</keyword>
<keyword id="KW-0999">Mitochondrion inner membrane</keyword>
<keyword id="KW-0520">NAD</keyword>
<keyword id="KW-0679">Respiratory chain</keyword>
<keyword id="KW-1278">Translocase</keyword>
<keyword id="KW-0812">Transmembrane</keyword>
<keyword id="KW-1133">Transmembrane helix</keyword>
<keyword id="KW-0813">Transport</keyword>
<keyword id="KW-0830">Ubiquinone</keyword>
<accession>Q330A5</accession>
<sequence length="347" mass="38806">MNPLIFTMILLTVMLGTAIVMTTSHWVMAWIGFEMNMLAIIPILMKKYNPRSMEASTKYFLTQATASMLLMLAIVINLTYSGQWSMTKPLNSTASIIMTLAMAMKLGLAPFHFWVPEVTQGVQLSSGLILLTWQKLAPMSILYQISPTINLDLLLLMSILSILVGGWGGLNQTQLRKILAYSSIAHMGWMTAIMVYNPTMALLNLAIYILLTTTTFVMLMVDSSTTTLSLSHMWNKMPLLTTAILTIMLSLGGLPPLSGFTPKWMIIQEMTKNDSMITPTIMAVMTLLNLYFYMRLTYSTSLTMFPSTNNMKVKWQFNNKKLTANLSPLIILSTLILPLSPMLALLE</sequence>
<proteinExistence type="inferred from homology"/>